<organism>
    <name type="scientific">Fusobacterium nucleatum subsp. nucleatum (strain ATCC 23726 / VPI 4351)</name>
    <dbReference type="NCBI Taxonomy" id="525283"/>
    <lineage>
        <taxon>Bacteria</taxon>
        <taxon>Fusobacteriati</taxon>
        <taxon>Fusobacteriota</taxon>
        <taxon>Fusobacteriia</taxon>
        <taxon>Fusobacteriales</taxon>
        <taxon>Fusobacteriaceae</taxon>
        <taxon>Fusobacterium</taxon>
    </lineage>
</organism>
<feature type="chain" id="PRO_0000438276" description="Riboflavin transporter ImpX">
    <location>
        <begin position="1"/>
        <end position="299"/>
    </location>
</feature>
<feature type="transmembrane region" description="Helical" evidence="1">
    <location>
        <begin position="7"/>
        <end position="27"/>
    </location>
</feature>
<feature type="transmembrane region" description="Helical" evidence="1">
    <location>
        <begin position="34"/>
        <end position="54"/>
    </location>
</feature>
<feature type="transmembrane region" description="Helical" evidence="1">
    <location>
        <begin position="68"/>
        <end position="88"/>
    </location>
</feature>
<feature type="transmembrane region" description="Helical" evidence="1">
    <location>
        <begin position="101"/>
        <end position="121"/>
    </location>
</feature>
<feature type="transmembrane region" description="Helical" evidence="1">
    <location>
        <begin position="129"/>
        <end position="149"/>
    </location>
</feature>
<feature type="transmembrane region" description="Helical" evidence="1">
    <location>
        <begin position="158"/>
        <end position="178"/>
    </location>
</feature>
<feature type="transmembrane region" description="Helical" evidence="1">
    <location>
        <begin position="202"/>
        <end position="222"/>
    </location>
</feature>
<feature type="transmembrane region" description="Helical" evidence="1">
    <location>
        <begin position="224"/>
        <end position="244"/>
    </location>
</feature>
<feature type="transmembrane region" description="Helical" evidence="1">
    <location>
        <begin position="253"/>
        <end position="273"/>
    </location>
</feature>
<feature type="transmembrane region" description="Helical" evidence="1">
    <location>
        <begin position="276"/>
        <end position="296"/>
    </location>
</feature>
<feature type="domain" description="EamA 1" evidence="1">
    <location>
        <begin position="6"/>
        <end position="144"/>
    </location>
</feature>
<feature type="domain" description="EamA 2" evidence="1">
    <location>
        <begin position="162"/>
        <end position="294"/>
    </location>
</feature>
<reference key="1">
    <citation type="submission" date="2010-04" db="EMBL/GenBank/DDBJ databases">
        <authorList>
            <person name="Qin X."/>
            <person name="Bachman B."/>
            <person name="Battles P."/>
            <person name="Bell A."/>
            <person name="Bess C."/>
            <person name="Bickham C."/>
            <person name="Chaboub L."/>
            <person name="Chen D."/>
            <person name="Coyle M."/>
            <person name="Deiros D.R."/>
            <person name="Dinh H."/>
            <person name="Forbes L."/>
            <person name="Fowler G."/>
            <person name="Francisco L."/>
            <person name="Fu Q."/>
            <person name="Gubbala S."/>
            <person name="Hale W."/>
            <person name="Han Y."/>
            <person name="Hemphill L."/>
            <person name="Highlander S.K."/>
            <person name="Hirani K."/>
            <person name="Hogues M."/>
            <person name="Jackson L."/>
            <person name="Jakkamsetti A."/>
            <person name="Javaid M."/>
            <person name="Jiang H."/>
            <person name="Korchina V."/>
            <person name="Kovar C."/>
            <person name="Lara F."/>
            <person name="Lee S."/>
            <person name="Mata R."/>
            <person name="Mathew T."/>
            <person name="Moen C."/>
            <person name="Morales K."/>
            <person name="Munidasa M."/>
            <person name="Nazareth L."/>
            <person name="Ngo R."/>
            <person name="Nguyen L."/>
            <person name="Okwuonu G."/>
            <person name="Ongeri F."/>
            <person name="Patil S."/>
            <person name="Petrosino J."/>
            <person name="Pham C."/>
            <person name="Pham P."/>
            <person name="Pu L.-L."/>
            <person name="Puazo M."/>
            <person name="Raj R."/>
            <person name="Reid J."/>
            <person name="Rouhana J."/>
            <person name="Saada N."/>
            <person name="Shang Y."/>
            <person name="Simmons D."/>
            <person name="Thornton R."/>
            <person name="Warren J."/>
            <person name="Weissenberger G."/>
            <person name="Zhang J."/>
            <person name="Zhang L."/>
            <person name="Zhou C."/>
            <person name="Zhu D."/>
            <person name="Muzny D."/>
            <person name="Worley K."/>
            <person name="Gibbs R."/>
        </authorList>
    </citation>
    <scope>NUCLEOTIDE SEQUENCE [LARGE SCALE GENOMIC DNA]</scope>
    <source>
        <strain>ATCC 23726 / VPI 4351</strain>
    </source>
</reference>
<reference key="2">
    <citation type="journal article" date="2015" name="PLoS ONE">
        <title>Extensive identification of bacterial riboflavin transporters and their distribution across bacterial species.</title>
        <authorList>
            <person name="Gutierrez-Preciado A."/>
            <person name="Torres A.G."/>
            <person name="Merino E."/>
            <person name="Bonomi H.R."/>
            <person name="Goldbaum F.A."/>
            <person name="Garcia-Angulo V.A."/>
        </authorList>
    </citation>
    <scope>FUNCTION AS A TRANSPORTER</scope>
    <scope>INDUCTION</scope>
    <source>
        <strain>ATCC 23726 / VPI 4351</strain>
    </source>
</reference>
<name>IMPX_FUSN2</name>
<gene>
    <name evidence="3" type="primary">impX</name>
    <name evidence="5" type="ORF">HMPREF0397_0350</name>
</gene>
<evidence type="ECO:0000255" key="1"/>
<evidence type="ECO:0000269" key="2">
    <source>
    </source>
</evidence>
<evidence type="ECO:0000303" key="3">
    <source>
    </source>
</evidence>
<evidence type="ECO:0000305" key="4"/>
<evidence type="ECO:0000312" key="5">
    <source>
        <dbReference type="EMBL" id="EFG96032.1"/>
    </source>
</evidence>
<sequence>MDNHIKGALLVCLAATMWGFDGIALTPRLFSLHVPFVVFILHLLPLILMSILFGKEEVKNIKKLQKNDLFFFFCVALFGGCLGTLCIVKALFLVNFKHLTVVTLLQKLQPIFAIILARLLLKEKLKRAYLFWGFLALLGGYLLTFEFHLPEFVSSDNLLPASLYSLLAAFSFGSATVFGKRILKSASFRTALYLRYLMTSCIMFVIVTFTSGFGDFLVATAGNWLIFVIIALTTGSGAILLYYFGLRYITAKVATMCELCFPISSVVFDYLINGNVLSPVQIASAILMIISIIKISKLN</sequence>
<protein>
    <recommendedName>
        <fullName evidence="4">Riboflavin transporter ImpX</fullName>
    </recommendedName>
</protein>
<dbReference type="EMBL" id="ADVK01000012">
    <property type="protein sequence ID" value="EFG96032.1"/>
    <property type="molecule type" value="Genomic_DNA"/>
</dbReference>
<dbReference type="RefSeq" id="WP_005902102.1">
    <property type="nucleotide sequence ID" value="NZ_CP028109.1"/>
</dbReference>
<dbReference type="SMR" id="D5RAW5"/>
<dbReference type="TCDB" id="2.A.7.3.71">
    <property type="family name" value="the drug/metabolite transporter (dmt) superfamily"/>
</dbReference>
<dbReference type="Proteomes" id="UP000003643">
    <property type="component" value="Unassembled WGS sequence"/>
</dbReference>
<dbReference type="GO" id="GO:0005886">
    <property type="term" value="C:plasma membrane"/>
    <property type="evidence" value="ECO:0007669"/>
    <property type="project" value="UniProtKB-SubCell"/>
</dbReference>
<dbReference type="InterPro" id="IPR050638">
    <property type="entry name" value="AA-Vitamin_Transporters"/>
</dbReference>
<dbReference type="InterPro" id="IPR000620">
    <property type="entry name" value="EamA_dom"/>
</dbReference>
<dbReference type="PANTHER" id="PTHR32322:SF2">
    <property type="entry name" value="EAMA DOMAIN-CONTAINING PROTEIN"/>
    <property type="match status" value="1"/>
</dbReference>
<dbReference type="PANTHER" id="PTHR32322">
    <property type="entry name" value="INNER MEMBRANE TRANSPORTER"/>
    <property type="match status" value="1"/>
</dbReference>
<dbReference type="Pfam" id="PF00892">
    <property type="entry name" value="EamA"/>
    <property type="match status" value="2"/>
</dbReference>
<dbReference type="SUPFAM" id="SSF103481">
    <property type="entry name" value="Multidrug resistance efflux transporter EmrE"/>
    <property type="match status" value="2"/>
</dbReference>
<keyword id="KW-1003">Cell membrane</keyword>
<keyword id="KW-0472">Membrane</keyword>
<keyword id="KW-0677">Repeat</keyword>
<keyword id="KW-0812">Transmembrane</keyword>
<keyword id="KW-1133">Transmembrane helix</keyword>
<keyword id="KW-0813">Transport</keyword>
<proteinExistence type="evidence at protein level"/>
<accession>D5RAW5</accession>
<comment type="function">
    <text evidence="2">Transports riboflavin into the cell.</text>
</comment>
<comment type="subcellular location">
    <subcellularLocation>
        <location evidence="4">Cell membrane</location>
        <topology evidence="1">Multi-pass membrane protein</topology>
    </subcellularLocation>
</comment>
<comment type="induction">
    <text evidence="2">Expression is probably regulated by riboflavin, via an FMN riboswitch.</text>
</comment>
<comment type="similarity">
    <text evidence="4">Belongs to the EamA transporter family.</text>
</comment>